<organism>
    <name type="scientific">Pasteurella multocida (strain Pm70)</name>
    <dbReference type="NCBI Taxonomy" id="272843"/>
    <lineage>
        <taxon>Bacteria</taxon>
        <taxon>Pseudomonadati</taxon>
        <taxon>Pseudomonadota</taxon>
        <taxon>Gammaproteobacteria</taxon>
        <taxon>Pasteurellales</taxon>
        <taxon>Pasteurellaceae</taxon>
        <taxon>Pasteurella</taxon>
    </lineage>
</organism>
<name>NRFA_PASMU</name>
<reference key="1">
    <citation type="journal article" date="2001" name="Proc. Natl. Acad. Sci. U.S.A.">
        <title>Complete genomic sequence of Pasteurella multocida Pm70.</title>
        <authorList>
            <person name="May B.J."/>
            <person name="Zhang Q."/>
            <person name="Li L.L."/>
            <person name="Paustian M.L."/>
            <person name="Whittam T.S."/>
            <person name="Kapur V."/>
        </authorList>
    </citation>
    <scope>NUCLEOTIDE SEQUENCE [LARGE SCALE GENOMIC DNA]</scope>
    <source>
        <strain>Pm70</strain>
    </source>
</reference>
<protein>
    <recommendedName>
        <fullName evidence="1">Cytochrome c-552</fullName>
        <ecNumber evidence="1">1.7.2.2</ecNumber>
    </recommendedName>
    <alternativeName>
        <fullName evidence="1">Ammonia-forming cytochrome c nitrite reductase</fullName>
        <shortName evidence="1">Cytochrome c nitrite reductase</shortName>
    </alternativeName>
</protein>
<feature type="signal peptide" evidence="1">
    <location>
        <begin position="1"/>
        <end position="50"/>
    </location>
</feature>
<feature type="chain" id="PRO_0000006580" description="Cytochrome c-552">
    <location>
        <begin position="51"/>
        <end position="510"/>
    </location>
</feature>
<feature type="binding site" description="axial binding residue" evidence="1">
    <location>
        <position position="124"/>
    </location>
    <ligand>
        <name>heme c</name>
        <dbReference type="ChEBI" id="CHEBI:61717"/>
        <label>3</label>
    </ligand>
    <ligandPart>
        <name>Fe</name>
        <dbReference type="ChEBI" id="CHEBI:18248"/>
    </ligandPart>
</feature>
<feature type="binding site" description="covalent" evidence="1">
    <location>
        <position position="152"/>
    </location>
    <ligand>
        <name>heme</name>
        <dbReference type="ChEBI" id="CHEBI:30413"/>
        <label>1</label>
    </ligand>
</feature>
<feature type="binding site" description="covalent" evidence="1">
    <location>
        <position position="155"/>
    </location>
    <ligand>
        <name>heme</name>
        <dbReference type="ChEBI" id="CHEBI:30413"/>
        <label>1</label>
    </ligand>
</feature>
<feature type="binding site" description="axial binding residue" evidence="1">
    <location>
        <position position="156"/>
    </location>
    <ligand>
        <name>heme</name>
        <dbReference type="ChEBI" id="CHEBI:30413"/>
        <label>1</label>
    </ligand>
    <ligandPart>
        <name>Fe</name>
        <dbReference type="ChEBI" id="CHEBI:18248"/>
    </ligandPart>
</feature>
<feature type="binding site" description="covalent" evidence="1">
    <location>
        <position position="190"/>
    </location>
    <ligand>
        <name>heme c</name>
        <dbReference type="ChEBI" id="CHEBI:61717"/>
        <label>2</label>
    </ligand>
</feature>
<feature type="binding site" description="covalent" evidence="1">
    <location>
        <position position="193"/>
    </location>
    <ligand>
        <name>heme c</name>
        <dbReference type="ChEBI" id="CHEBI:61717"/>
        <label>2</label>
    </ligand>
</feature>
<feature type="binding site" description="axial binding residue" evidence="1">
    <location>
        <position position="194"/>
    </location>
    <ligand>
        <name>heme c</name>
        <dbReference type="ChEBI" id="CHEBI:61717"/>
        <label>2</label>
    </ligand>
    <ligandPart>
        <name>Fe</name>
        <dbReference type="ChEBI" id="CHEBI:18248"/>
    </ligandPart>
</feature>
<feature type="binding site" description="covalent" evidence="1">
    <location>
        <position position="239"/>
    </location>
    <ligand>
        <name>heme c</name>
        <dbReference type="ChEBI" id="CHEBI:61717"/>
        <label>3</label>
    </ligand>
</feature>
<feature type="binding site" description="covalent" evidence="1">
    <location>
        <position position="242"/>
    </location>
    <ligand>
        <name>heme c</name>
        <dbReference type="ChEBI" id="CHEBI:61717"/>
        <label>3</label>
    </ligand>
</feature>
<feature type="binding site" description="axial binding residue" evidence="1">
    <location>
        <position position="243"/>
    </location>
    <ligand>
        <name>heme c</name>
        <dbReference type="ChEBI" id="CHEBI:61717"/>
        <label>3</label>
    </ligand>
    <ligandPart>
        <name>Fe</name>
        <dbReference type="ChEBI" id="CHEBI:18248"/>
    </ligandPart>
</feature>
<feature type="binding site" evidence="1">
    <location>
        <position position="245"/>
    </location>
    <ligand>
        <name>Ca(2+)</name>
        <dbReference type="ChEBI" id="CHEBI:29108"/>
    </ligand>
</feature>
<feature type="binding site" evidence="1">
    <location>
        <position position="246"/>
    </location>
    <ligand>
        <name>Ca(2+)</name>
        <dbReference type="ChEBI" id="CHEBI:29108"/>
    </ligand>
</feature>
<feature type="binding site" evidence="1">
    <location>
        <position position="246"/>
    </location>
    <ligand>
        <name>substrate</name>
    </ligand>
</feature>
<feature type="binding site" evidence="1">
    <location>
        <position position="291"/>
    </location>
    <ligand>
        <name>Ca(2+)</name>
        <dbReference type="ChEBI" id="CHEBI:29108"/>
    </ligand>
</feature>
<feature type="binding site" evidence="1">
    <location>
        <position position="293"/>
    </location>
    <ligand>
        <name>Ca(2+)</name>
        <dbReference type="ChEBI" id="CHEBI:29108"/>
    </ligand>
</feature>
<feature type="binding site" evidence="1">
    <location>
        <position position="294"/>
    </location>
    <ligand>
        <name>substrate</name>
    </ligand>
</feature>
<feature type="binding site" description="axial binding residue" evidence="1">
    <location>
        <position position="305"/>
    </location>
    <ligand>
        <name>heme c</name>
        <dbReference type="ChEBI" id="CHEBI:61717"/>
        <label>5</label>
    </ligand>
    <ligandPart>
        <name>Fe</name>
        <dbReference type="ChEBI" id="CHEBI:18248"/>
    </ligandPart>
</feature>
<feature type="binding site" description="covalent" evidence="1">
    <location>
        <position position="312"/>
    </location>
    <ligand>
        <name>heme c</name>
        <dbReference type="ChEBI" id="CHEBI:61717"/>
        <label>4</label>
    </ligand>
</feature>
<feature type="binding site" description="covalent" evidence="1">
    <location>
        <position position="315"/>
    </location>
    <ligand>
        <name>heme c</name>
        <dbReference type="ChEBI" id="CHEBI:61717"/>
        <label>4</label>
    </ligand>
</feature>
<feature type="binding site" description="axial binding residue" evidence="1">
    <location>
        <position position="316"/>
    </location>
    <ligand>
        <name>heme c</name>
        <dbReference type="ChEBI" id="CHEBI:61717"/>
        <label>4</label>
    </ligand>
    <ligandPart>
        <name>Fe</name>
        <dbReference type="ChEBI" id="CHEBI:18248"/>
    </ligandPart>
</feature>
<feature type="binding site" description="axial binding residue" evidence="1">
    <location>
        <position position="331"/>
    </location>
    <ligand>
        <name>heme c</name>
        <dbReference type="ChEBI" id="CHEBI:61717"/>
        <label>2</label>
    </ligand>
    <ligandPart>
        <name>Fe</name>
        <dbReference type="ChEBI" id="CHEBI:18248"/>
    </ligandPart>
</feature>
<feature type="binding site" description="covalent" evidence="1">
    <location>
        <position position="344"/>
    </location>
    <ligand>
        <name>heme c</name>
        <dbReference type="ChEBI" id="CHEBI:61717"/>
        <label>5</label>
    </ligand>
</feature>
<feature type="binding site" description="covalent" evidence="1">
    <location>
        <position position="347"/>
    </location>
    <ligand>
        <name>heme c</name>
        <dbReference type="ChEBI" id="CHEBI:61717"/>
        <label>5</label>
    </ligand>
</feature>
<feature type="binding site" description="axial binding residue" evidence="1">
    <location>
        <position position="348"/>
    </location>
    <ligand>
        <name>heme c</name>
        <dbReference type="ChEBI" id="CHEBI:61717"/>
        <label>5</label>
    </ligand>
    <ligandPart>
        <name>Fe</name>
        <dbReference type="ChEBI" id="CHEBI:18248"/>
    </ligandPart>
</feature>
<feature type="binding site" description="axial binding residue" evidence="1">
    <location>
        <position position="423"/>
    </location>
    <ligand>
        <name>heme c</name>
        <dbReference type="ChEBI" id="CHEBI:61717"/>
        <label>4</label>
    </ligand>
    <ligandPart>
        <name>Fe</name>
        <dbReference type="ChEBI" id="CHEBI:18248"/>
    </ligandPart>
</feature>
<proteinExistence type="inferred from homology"/>
<gene>
    <name evidence="1" type="primary">nrfA</name>
    <name type="ordered locus">PM0023</name>
</gene>
<comment type="function">
    <text evidence="1">Catalyzes the reduction of nitrite to ammonia, consuming six electrons in the process.</text>
</comment>
<comment type="catalytic activity">
    <reaction evidence="1">
        <text>6 Fe(III)-[cytochrome c] + NH4(+) + 2 H2O = 6 Fe(II)-[cytochrome c] + nitrite + 8 H(+)</text>
        <dbReference type="Rhea" id="RHEA:13089"/>
        <dbReference type="Rhea" id="RHEA-COMP:10350"/>
        <dbReference type="Rhea" id="RHEA-COMP:14399"/>
        <dbReference type="ChEBI" id="CHEBI:15377"/>
        <dbReference type="ChEBI" id="CHEBI:15378"/>
        <dbReference type="ChEBI" id="CHEBI:16301"/>
        <dbReference type="ChEBI" id="CHEBI:28938"/>
        <dbReference type="ChEBI" id="CHEBI:29033"/>
        <dbReference type="ChEBI" id="CHEBI:29034"/>
        <dbReference type="EC" id="1.7.2.2"/>
    </reaction>
</comment>
<comment type="cofactor">
    <cofactor evidence="1">
        <name>Ca(2+)</name>
        <dbReference type="ChEBI" id="CHEBI:29108"/>
    </cofactor>
    <text evidence="1">Binds 1 Ca(2+) ion per monomer.</text>
</comment>
<comment type="cofactor">
    <cofactor evidence="1">
        <name>heme c</name>
        <dbReference type="ChEBI" id="CHEBI:61717"/>
    </cofactor>
    <text evidence="1">Binds 5 heme c groups covalently per monomer.</text>
</comment>
<comment type="pathway">
    <text evidence="1">Nitrogen metabolism; nitrate reduction (assimilation).</text>
</comment>
<comment type="subcellular location">
    <subcellularLocation>
        <location evidence="1">Periplasm</location>
    </subcellularLocation>
</comment>
<comment type="similarity">
    <text evidence="1">Belongs to the cytochrome c-552 family.</text>
</comment>
<dbReference type="EC" id="1.7.2.2" evidence="1"/>
<dbReference type="EMBL" id="AE004439">
    <property type="protein sequence ID" value="AAK02107.1"/>
    <property type="molecule type" value="Genomic_DNA"/>
</dbReference>
<dbReference type="SMR" id="Q9CPL4"/>
<dbReference type="STRING" id="272843.PM0023"/>
<dbReference type="EnsemblBacteria" id="AAK02107">
    <property type="protein sequence ID" value="AAK02107"/>
    <property type="gene ID" value="PM0023"/>
</dbReference>
<dbReference type="KEGG" id="pmu:PM0023"/>
<dbReference type="HOGENOM" id="CLU_035040_1_0_6"/>
<dbReference type="UniPathway" id="UPA00653"/>
<dbReference type="Proteomes" id="UP000000809">
    <property type="component" value="Chromosome"/>
</dbReference>
<dbReference type="GO" id="GO:0030288">
    <property type="term" value="C:outer membrane-bounded periplasmic space"/>
    <property type="evidence" value="ECO:0007669"/>
    <property type="project" value="TreeGrafter"/>
</dbReference>
<dbReference type="GO" id="GO:0005509">
    <property type="term" value="F:calcium ion binding"/>
    <property type="evidence" value="ECO:0007669"/>
    <property type="project" value="UniProtKB-UniRule"/>
</dbReference>
<dbReference type="GO" id="GO:0020037">
    <property type="term" value="F:heme binding"/>
    <property type="evidence" value="ECO:0007669"/>
    <property type="project" value="InterPro"/>
</dbReference>
<dbReference type="GO" id="GO:0005506">
    <property type="term" value="F:iron ion binding"/>
    <property type="evidence" value="ECO:0007669"/>
    <property type="project" value="UniProtKB-UniRule"/>
</dbReference>
<dbReference type="GO" id="GO:0042279">
    <property type="term" value="F:nitrite reductase (cytochrome, ammonia-forming) activity"/>
    <property type="evidence" value="ECO:0007669"/>
    <property type="project" value="UniProtKB-UniRule"/>
</dbReference>
<dbReference type="GO" id="GO:0019645">
    <property type="term" value="P:anaerobic electron transport chain"/>
    <property type="evidence" value="ECO:0007669"/>
    <property type="project" value="TreeGrafter"/>
</dbReference>
<dbReference type="GO" id="GO:0042128">
    <property type="term" value="P:nitrate assimilation"/>
    <property type="evidence" value="ECO:0007669"/>
    <property type="project" value="UniProtKB-UniRule"/>
</dbReference>
<dbReference type="CDD" id="cd00548">
    <property type="entry name" value="NrfA-like"/>
    <property type="match status" value="1"/>
</dbReference>
<dbReference type="FunFam" id="1.10.1130.10:FF:000002">
    <property type="entry name" value="Cytochrome c-552"/>
    <property type="match status" value="1"/>
</dbReference>
<dbReference type="FunFam" id="1.20.140.10:FF:000014">
    <property type="entry name" value="Cytochrome c-552"/>
    <property type="match status" value="1"/>
</dbReference>
<dbReference type="Gene3D" id="1.20.140.10">
    <property type="entry name" value="Butyryl-CoA Dehydrogenase, subunit A, domain 3"/>
    <property type="match status" value="1"/>
</dbReference>
<dbReference type="Gene3D" id="1.10.1130.10">
    <property type="entry name" value="Flavocytochrome C3, Chain A"/>
    <property type="match status" value="1"/>
</dbReference>
<dbReference type="HAMAP" id="MF_01182">
    <property type="entry name" value="Cytochrom_C552"/>
    <property type="match status" value="1"/>
</dbReference>
<dbReference type="InterPro" id="IPR003321">
    <property type="entry name" value="Cyt_c552"/>
</dbReference>
<dbReference type="InterPro" id="IPR017570">
    <property type="entry name" value="Cyt_c_NO2Rdtase_formate-dep"/>
</dbReference>
<dbReference type="InterPro" id="IPR036280">
    <property type="entry name" value="Multihaem_cyt_sf"/>
</dbReference>
<dbReference type="NCBIfam" id="TIGR03152">
    <property type="entry name" value="cyto_c552_HCOOH"/>
    <property type="match status" value="1"/>
</dbReference>
<dbReference type="NCBIfam" id="NF008339">
    <property type="entry name" value="PRK11125.1"/>
    <property type="match status" value="1"/>
</dbReference>
<dbReference type="PANTHER" id="PTHR30633:SF0">
    <property type="entry name" value="CYTOCHROME C-552"/>
    <property type="match status" value="1"/>
</dbReference>
<dbReference type="PANTHER" id="PTHR30633">
    <property type="entry name" value="CYTOCHROME C-552 RESPIRATORY NITRITE REDUCTASE"/>
    <property type="match status" value="1"/>
</dbReference>
<dbReference type="Pfam" id="PF02335">
    <property type="entry name" value="Cytochrom_C552"/>
    <property type="match status" value="1"/>
</dbReference>
<dbReference type="PIRSF" id="PIRSF000243">
    <property type="entry name" value="Cyt_c552"/>
    <property type="match status" value="1"/>
</dbReference>
<dbReference type="SUPFAM" id="SSF48695">
    <property type="entry name" value="Multiheme cytochromes"/>
    <property type="match status" value="1"/>
</dbReference>
<dbReference type="PROSITE" id="PS51008">
    <property type="entry name" value="MULTIHEME_CYTC"/>
    <property type="match status" value="1"/>
</dbReference>
<sequence length="510" mass="57260">MVVFLFILYRQSDLKFKSMNGVIIVNTLKKRLFVATTMIWGLSVTLPVLAEYKPIEQPVEPANPSLKIESRNDLFKEKYPKQYQTWADTSKSTDLDSVNYEDPRVIVLWAGYAFAKDYKKPRGHFYAVTDVREILRTAAPMTPDAGPMPMACWSCKSPDVPRLIAERGEAGYFGATWASGGSEVVNPIGCADCHDTTSKDFAEGKPALRIARPYVLRALEKIDHKFDTSDRTDQRAALCANCHVEYYFAGDLKQVTFPWDNGITVDAMEKYYDDIGFVDWTHAVSKAPMLKAQHPDYETWMLGVHGKNGVTCIDCHMPKVQGADGKVYTDHQIGNPFNAFEHTCANCHDQSKEKLQAMVKSRKTEIKDVMLRLEDQLVAAHFEAKAAWEAGATKEEMKEALQDIRHAQWRWDYAAAGHGGHIHAPDVLLKVIGTGLDKSSDARTKLVRVLAKHGITDPVQLPDISTAENAWKATGVDIEKERKAKAEFLKTVVPQWDKEAREKGLLPAEK</sequence>
<evidence type="ECO:0000255" key="1">
    <source>
        <dbReference type="HAMAP-Rule" id="MF_01182"/>
    </source>
</evidence>
<keyword id="KW-0106">Calcium</keyword>
<keyword id="KW-0249">Electron transport</keyword>
<keyword id="KW-0349">Heme</keyword>
<keyword id="KW-0408">Iron</keyword>
<keyword id="KW-0479">Metal-binding</keyword>
<keyword id="KW-0560">Oxidoreductase</keyword>
<keyword id="KW-0574">Periplasm</keyword>
<keyword id="KW-1185">Reference proteome</keyword>
<keyword id="KW-0732">Signal</keyword>
<keyword id="KW-0813">Transport</keyword>
<accession>Q9CPL4</accession>